<dbReference type="EMBL" id="AE014292">
    <property type="protein sequence ID" value="AAN33844.1"/>
    <property type="molecule type" value="Genomic_DNA"/>
</dbReference>
<dbReference type="EMBL" id="CP002998">
    <property type="protein sequence ID" value="AEM20120.1"/>
    <property type="molecule type" value="Genomic_DNA"/>
</dbReference>
<dbReference type="RefSeq" id="WP_004686048.1">
    <property type="nucleotide sequence ID" value="NZ_KN046805.1"/>
</dbReference>
<dbReference type="SMR" id="Q8FW10"/>
<dbReference type="GeneID" id="97535231"/>
<dbReference type="KEGG" id="bms:BRA0655"/>
<dbReference type="KEGG" id="bsi:BS1330_II0649"/>
<dbReference type="PATRIC" id="fig|204722.22.peg.2342"/>
<dbReference type="HOGENOM" id="CLU_031285_3_0_5"/>
<dbReference type="PhylomeDB" id="Q8FW10"/>
<dbReference type="PRO" id="PR:Q8FW10"/>
<dbReference type="Proteomes" id="UP000007104">
    <property type="component" value="Chromosome II"/>
</dbReference>
<dbReference type="GO" id="GO:0042597">
    <property type="term" value="C:periplasmic space"/>
    <property type="evidence" value="ECO:0007669"/>
    <property type="project" value="UniProtKB-SubCell"/>
</dbReference>
<dbReference type="CDD" id="cd14748">
    <property type="entry name" value="PBP2_UgpB"/>
    <property type="match status" value="1"/>
</dbReference>
<dbReference type="Gene3D" id="3.40.190.10">
    <property type="entry name" value="Periplasmic binding protein-like II"/>
    <property type="match status" value="2"/>
</dbReference>
<dbReference type="InterPro" id="IPR050490">
    <property type="entry name" value="Bact_solute-bd_prot1"/>
</dbReference>
<dbReference type="InterPro" id="IPR006059">
    <property type="entry name" value="SBP"/>
</dbReference>
<dbReference type="NCBIfam" id="NF008211">
    <property type="entry name" value="PRK10974.1"/>
    <property type="match status" value="1"/>
</dbReference>
<dbReference type="PANTHER" id="PTHR43649">
    <property type="entry name" value="ARABINOSE-BINDING PROTEIN-RELATED"/>
    <property type="match status" value="1"/>
</dbReference>
<dbReference type="PANTHER" id="PTHR43649:SF31">
    <property type="entry name" value="SN-GLYCEROL-3-PHOSPHATE-BINDING PERIPLASMIC PROTEIN UGPB"/>
    <property type="match status" value="1"/>
</dbReference>
<dbReference type="Pfam" id="PF13416">
    <property type="entry name" value="SBP_bac_8"/>
    <property type="match status" value="1"/>
</dbReference>
<dbReference type="SUPFAM" id="SSF53850">
    <property type="entry name" value="Periplasmic binding protein-like II"/>
    <property type="match status" value="1"/>
</dbReference>
<keyword id="KW-0574">Periplasm</keyword>
<keyword id="KW-0732">Signal</keyword>
<keyword id="KW-0813">Transport</keyword>
<feature type="signal peptide" evidence="2">
    <location>
        <begin position="1"/>
        <end position="25"/>
    </location>
</feature>
<feature type="chain" id="PRO_0000290128" description="sn-glycerol-3-phosphate-binding periplasmic protein UgpB">
    <location>
        <begin position="26"/>
        <end position="433"/>
    </location>
</feature>
<feature type="binding site" evidence="1">
    <location>
        <position position="67"/>
    </location>
    <ligand>
        <name>sn-glycerol 3-phosphate</name>
        <dbReference type="ChEBI" id="CHEBI:57597"/>
    </ligand>
</feature>
<feature type="binding site" evidence="1">
    <location>
        <position position="91"/>
    </location>
    <ligand>
        <name>sn-glycerol 3-phosphate</name>
        <dbReference type="ChEBI" id="CHEBI:57597"/>
    </ligand>
</feature>
<feature type="binding site" evidence="1">
    <location>
        <position position="146"/>
    </location>
    <ligand>
        <name>sn-glycerol 3-phosphate</name>
        <dbReference type="ChEBI" id="CHEBI:57597"/>
    </ligand>
</feature>
<feature type="binding site" evidence="1">
    <location>
        <position position="273"/>
    </location>
    <ligand>
        <name>sn-glycerol 3-phosphate</name>
        <dbReference type="ChEBI" id="CHEBI:57597"/>
    </ligand>
</feature>
<feature type="binding site" evidence="1">
    <location>
        <position position="307"/>
    </location>
    <ligand>
        <name>sn-glycerol 3-phosphate</name>
        <dbReference type="ChEBI" id="CHEBI:57597"/>
    </ligand>
</feature>
<feature type="binding site" evidence="1">
    <location>
        <position position="346"/>
    </location>
    <ligand>
        <name>sn-glycerol 3-phosphate</name>
        <dbReference type="ChEBI" id="CHEBI:57597"/>
    </ligand>
</feature>
<feature type="binding site" evidence="1">
    <location>
        <position position="397"/>
    </location>
    <ligand>
        <name>sn-glycerol 3-phosphate</name>
        <dbReference type="ChEBI" id="CHEBI:57597"/>
    </ligand>
</feature>
<reference key="1">
    <citation type="journal article" date="2002" name="Proc. Natl. Acad. Sci. U.S.A.">
        <title>The Brucella suis genome reveals fundamental similarities between animal and plant pathogens and symbionts.</title>
        <authorList>
            <person name="Paulsen I.T."/>
            <person name="Seshadri R."/>
            <person name="Nelson K.E."/>
            <person name="Eisen J.A."/>
            <person name="Heidelberg J.F."/>
            <person name="Read T.D."/>
            <person name="Dodson R.J."/>
            <person name="Umayam L.A."/>
            <person name="Brinkac L.M."/>
            <person name="Beanan M.J."/>
            <person name="Daugherty S.C."/>
            <person name="DeBoy R.T."/>
            <person name="Durkin A.S."/>
            <person name="Kolonay J.F."/>
            <person name="Madupu R."/>
            <person name="Nelson W.C."/>
            <person name="Ayodeji B."/>
            <person name="Kraul M."/>
            <person name="Shetty J."/>
            <person name="Malek J.A."/>
            <person name="Van Aken S.E."/>
            <person name="Riedmuller S."/>
            <person name="Tettelin H."/>
            <person name="Gill S.R."/>
            <person name="White O."/>
            <person name="Salzberg S.L."/>
            <person name="Hoover D.L."/>
            <person name="Lindler L.E."/>
            <person name="Halling S.M."/>
            <person name="Boyle S.M."/>
            <person name="Fraser C.M."/>
        </authorList>
    </citation>
    <scope>NUCLEOTIDE SEQUENCE [LARGE SCALE GENOMIC DNA]</scope>
    <source>
        <strain>1330</strain>
    </source>
</reference>
<reference key="2">
    <citation type="journal article" date="2011" name="J. Bacteriol.">
        <title>Revised genome sequence of Brucella suis 1330.</title>
        <authorList>
            <person name="Tae H."/>
            <person name="Shallom S."/>
            <person name="Settlage R."/>
            <person name="Preston D."/>
            <person name="Adams L.G."/>
            <person name="Garner H.R."/>
        </authorList>
    </citation>
    <scope>NUCLEOTIDE SEQUENCE [LARGE SCALE GENOMIC DNA]</scope>
    <source>
        <strain>1330</strain>
    </source>
</reference>
<accession>Q8FW10</accession>
<accession>G0KD32</accession>
<proteinExistence type="inferred from homology"/>
<comment type="function">
    <text evidence="1">Part of the ABC transporter complex UgpBAEC involved in sn-glycerol-3-phosphate (G3P) import. Binds G3P.</text>
</comment>
<comment type="subunit">
    <text evidence="1">The complex is composed of two ATP-binding proteins (UgpC), two transmembrane proteins (UgpA and UgpE) and a solute-binding protein (UgpB).</text>
</comment>
<comment type="subcellular location">
    <subcellularLocation>
        <location evidence="1">Periplasm</location>
    </subcellularLocation>
</comment>
<comment type="similarity">
    <text evidence="3">Belongs to the bacterial solute-binding protein 1 family.</text>
</comment>
<gene>
    <name type="primary">ugpB</name>
    <name type="ordered locus">BRA0655</name>
    <name type="ordered locus">BS1330_II0649</name>
</gene>
<protein>
    <recommendedName>
        <fullName evidence="1">sn-glycerol-3-phosphate-binding periplasmic protein UgpB</fullName>
    </recommendedName>
</protein>
<name>UGPB_BRUSU</name>
<sequence>MFTRLITTSALTGAIALTIGSQAFAQTELAWWHGMTGANNEMVNELSKEFNESQSEYKIVPVYKGNYPETLNAGIAAFRSKQPPAILQVFDAGSGVMMAAEGAIVPAAEVLEKGGYKFDKSQYLPGIVAYYSKPDGTMLSFPYNSSSPILYYNKDAFKKAGLDENKPPKTWPEVFEAAKKIKASGASPCGFTSTWLTWIQTENFAAWNNVPYGTNENGLAGTDVKLEINSPLYVEHFQAIADLAKDGTFRYGGRTSEAKQLFTSGECAMLTESSGGLGDVVKSGINYGIGQLPYYEGHGPQNTIPGGASLWVFAGLSDDQYKGIAEFFNFLSQTKIQVKLHEKSGYLPVTLAAYEETKKSDFYEKNPGRETPILQMMGKEPTENSKGVRLVNLPQVRDILNEEFEAMLGGKQDAKTALDNAVKRGNAAIAAAQ</sequence>
<organism>
    <name type="scientific">Brucella suis biovar 1 (strain 1330)</name>
    <dbReference type="NCBI Taxonomy" id="204722"/>
    <lineage>
        <taxon>Bacteria</taxon>
        <taxon>Pseudomonadati</taxon>
        <taxon>Pseudomonadota</taxon>
        <taxon>Alphaproteobacteria</taxon>
        <taxon>Hyphomicrobiales</taxon>
        <taxon>Brucellaceae</taxon>
        <taxon>Brucella/Ochrobactrum group</taxon>
        <taxon>Brucella</taxon>
    </lineage>
</organism>
<evidence type="ECO:0000250" key="1">
    <source>
        <dbReference type="UniProtKB" id="P0AG80"/>
    </source>
</evidence>
<evidence type="ECO:0000255" key="2"/>
<evidence type="ECO:0000305" key="3"/>